<proteinExistence type="inferred from homology"/>
<sequence length="345" mass="37326">MEFLSKYTACLSNWGLNLEPGLQTVGAAVLLTTGTLFIASRVLTFVRVLLSLFVLPGKPLRSFGPKGSWAVVTGASDGLGKEFSLQLARAGFNIVLVSRTASKLTTLAEEITTKHSVQTKTLAMDYAANNDADYEELKAIVDGLDVAVLINNVGKSHDIPTPFALTPEDEMTDIVTINCLGTLRTTQLIIPGMMQRKRGLVLTMGSFGGLLPTPLLATYSGSKAFLQQWSTSLGSELEPYGITVELVQAYLITSAMSKVRRTSATIPDPRAFVKAVLSKIGRNGGSPGYAYSSSPYWSHGLMAWFLTCVMQPMGKLVVGQNKSMHEAIRKRALRKAEREKGKKST</sequence>
<reference key="1">
    <citation type="journal article" date="2005" name="Nature">
        <title>Genomic sequence of the pathogenic and allergenic filamentous fungus Aspergillus fumigatus.</title>
        <authorList>
            <person name="Nierman W.C."/>
            <person name="Pain A."/>
            <person name="Anderson M.J."/>
            <person name="Wortman J.R."/>
            <person name="Kim H.S."/>
            <person name="Arroyo J."/>
            <person name="Berriman M."/>
            <person name="Abe K."/>
            <person name="Archer D.B."/>
            <person name="Bermejo C."/>
            <person name="Bennett J.W."/>
            <person name="Bowyer P."/>
            <person name="Chen D."/>
            <person name="Collins M."/>
            <person name="Coulsen R."/>
            <person name="Davies R."/>
            <person name="Dyer P.S."/>
            <person name="Farman M.L."/>
            <person name="Fedorova N."/>
            <person name="Fedorova N.D."/>
            <person name="Feldblyum T.V."/>
            <person name="Fischer R."/>
            <person name="Fosker N."/>
            <person name="Fraser A."/>
            <person name="Garcia J.L."/>
            <person name="Garcia M.J."/>
            <person name="Goble A."/>
            <person name="Goldman G.H."/>
            <person name="Gomi K."/>
            <person name="Griffith-Jones S."/>
            <person name="Gwilliam R."/>
            <person name="Haas B.J."/>
            <person name="Haas H."/>
            <person name="Harris D.E."/>
            <person name="Horiuchi H."/>
            <person name="Huang J."/>
            <person name="Humphray S."/>
            <person name="Jimenez J."/>
            <person name="Keller N."/>
            <person name="Khouri H."/>
            <person name="Kitamoto K."/>
            <person name="Kobayashi T."/>
            <person name="Konzack S."/>
            <person name="Kulkarni R."/>
            <person name="Kumagai T."/>
            <person name="Lafton A."/>
            <person name="Latge J.-P."/>
            <person name="Li W."/>
            <person name="Lord A."/>
            <person name="Lu C."/>
            <person name="Majoros W.H."/>
            <person name="May G.S."/>
            <person name="Miller B.L."/>
            <person name="Mohamoud Y."/>
            <person name="Molina M."/>
            <person name="Monod M."/>
            <person name="Mouyna I."/>
            <person name="Mulligan S."/>
            <person name="Murphy L.D."/>
            <person name="O'Neil S."/>
            <person name="Paulsen I."/>
            <person name="Penalva M.A."/>
            <person name="Pertea M."/>
            <person name="Price C."/>
            <person name="Pritchard B.L."/>
            <person name="Quail M.A."/>
            <person name="Rabbinowitsch E."/>
            <person name="Rawlins N."/>
            <person name="Rajandream M.A."/>
            <person name="Reichard U."/>
            <person name="Renauld H."/>
            <person name="Robson G.D."/>
            <person name="Rodriguez de Cordoba S."/>
            <person name="Rodriguez-Pena J.M."/>
            <person name="Ronning C.M."/>
            <person name="Rutter S."/>
            <person name="Salzberg S.L."/>
            <person name="Sanchez M."/>
            <person name="Sanchez-Ferrero J.C."/>
            <person name="Saunders D."/>
            <person name="Seeger K."/>
            <person name="Squares R."/>
            <person name="Squares S."/>
            <person name="Takeuchi M."/>
            <person name="Tekaia F."/>
            <person name="Turner G."/>
            <person name="Vazquez de Aldana C.R."/>
            <person name="Weidman J."/>
            <person name="White O."/>
            <person name="Woodward J.R."/>
            <person name="Yu J.-H."/>
            <person name="Fraser C.M."/>
            <person name="Galagan J.E."/>
            <person name="Asai K."/>
            <person name="Machida M."/>
            <person name="Hall N."/>
            <person name="Barrell B.G."/>
            <person name="Denning D.W."/>
        </authorList>
    </citation>
    <scope>NUCLEOTIDE SEQUENCE [LARGE SCALE GENOMIC DNA]</scope>
    <source>
        <strain>ATCC MYA-4609 / CBS 101355 / FGSC A1100 / Af293</strain>
    </source>
</reference>
<comment type="function">
    <text evidence="4">Component of the microsomal membrane bound fatty acid elongation system, which produces the 26-carbon very long-chain fatty acids (VLCFA) from palmitate. Catalyzes the reduction of the 3-ketoacyl-CoA intermediate that is formed in each cycle of fatty acid elongation. VLCFAs serve as precursors for ceramide and sphingolipids.</text>
</comment>
<comment type="catalytic activity">
    <reaction evidence="4">
        <text>a very-long-chain (3R)-3-hydroxyacyl-CoA + NADP(+) = a very-long-chain 3-oxoacyl-CoA + NADPH + H(+)</text>
        <dbReference type="Rhea" id="RHEA:48680"/>
        <dbReference type="ChEBI" id="CHEBI:15378"/>
        <dbReference type="ChEBI" id="CHEBI:57783"/>
        <dbReference type="ChEBI" id="CHEBI:58349"/>
        <dbReference type="ChEBI" id="CHEBI:85440"/>
        <dbReference type="ChEBI" id="CHEBI:90725"/>
        <dbReference type="EC" id="1.1.1.330"/>
    </reaction>
</comment>
<comment type="pathway">
    <text evidence="3">Lipid metabolism; fatty acid biosynthesis.</text>
</comment>
<comment type="subcellular location">
    <subcellularLocation>
        <location evidence="4">Endoplasmic reticulum membrane</location>
        <topology evidence="4">Single-pass membrane protein</topology>
    </subcellularLocation>
</comment>
<comment type="similarity">
    <text evidence="4">Belongs to the short-chain dehydrogenases/reductases (SDR) family.</text>
</comment>
<name>MKAR_ASPFU</name>
<gene>
    <name type="ORF">AFUA_2G11540</name>
</gene>
<organism>
    <name type="scientific">Aspergillus fumigatus (strain ATCC MYA-4609 / CBS 101355 / FGSC A1100 / Af293)</name>
    <name type="common">Neosartorya fumigata</name>
    <dbReference type="NCBI Taxonomy" id="330879"/>
    <lineage>
        <taxon>Eukaryota</taxon>
        <taxon>Fungi</taxon>
        <taxon>Dikarya</taxon>
        <taxon>Ascomycota</taxon>
        <taxon>Pezizomycotina</taxon>
        <taxon>Eurotiomycetes</taxon>
        <taxon>Eurotiomycetidae</taxon>
        <taxon>Eurotiales</taxon>
        <taxon>Aspergillaceae</taxon>
        <taxon>Aspergillus</taxon>
        <taxon>Aspergillus subgen. Fumigati</taxon>
    </lineage>
</organism>
<feature type="chain" id="PRO_0000357297" description="Very-long-chain 3-oxoacyl-CoA reductase">
    <location>
        <begin position="1"/>
        <end position="345"/>
    </location>
</feature>
<feature type="transmembrane region" description="Helical" evidence="4">
    <location>
        <begin position="26"/>
        <end position="46"/>
    </location>
</feature>
<feature type="active site" description="Proton donor" evidence="2">
    <location>
        <position position="219"/>
    </location>
</feature>
<feature type="active site" description="Lowers pKa of active site Tyr" evidence="2">
    <location>
        <position position="223"/>
    </location>
</feature>
<feature type="binding site" evidence="1">
    <location>
        <position position="71"/>
    </location>
    <ligand>
        <name>NADP(+)</name>
        <dbReference type="ChEBI" id="CHEBI:58349"/>
    </ligand>
</feature>
<feature type="binding site" evidence="1">
    <location>
        <position position="125"/>
    </location>
    <ligand>
        <name>NADP(+)</name>
        <dbReference type="ChEBI" id="CHEBI:58349"/>
    </ligand>
</feature>
<feature type="binding site" evidence="1">
    <location>
        <position position="133"/>
    </location>
    <ligand>
        <name>NADP(+)</name>
        <dbReference type="ChEBI" id="CHEBI:58349"/>
    </ligand>
</feature>
<feature type="binding site" evidence="2">
    <location>
        <position position="152"/>
    </location>
    <ligand>
        <name>NADP(+)</name>
        <dbReference type="ChEBI" id="CHEBI:58349"/>
    </ligand>
</feature>
<feature type="binding site" evidence="2">
    <location>
        <position position="219"/>
    </location>
    <ligand>
        <name>NADP(+)</name>
        <dbReference type="ChEBI" id="CHEBI:58349"/>
    </ligand>
</feature>
<feature type="binding site" evidence="2">
    <location>
        <position position="223"/>
    </location>
    <ligand>
        <name>NADP(+)</name>
        <dbReference type="ChEBI" id="CHEBI:58349"/>
    </ligand>
</feature>
<feature type="binding site" evidence="2">
    <location>
        <position position="252"/>
    </location>
    <ligand>
        <name>NADP(+)</name>
        <dbReference type="ChEBI" id="CHEBI:58349"/>
    </ligand>
</feature>
<feature type="binding site" evidence="1">
    <location>
        <position position="254"/>
    </location>
    <ligand>
        <name>NADP(+)</name>
        <dbReference type="ChEBI" id="CHEBI:58349"/>
    </ligand>
</feature>
<keyword id="KW-0256">Endoplasmic reticulum</keyword>
<keyword id="KW-0275">Fatty acid biosynthesis</keyword>
<keyword id="KW-0276">Fatty acid metabolism</keyword>
<keyword id="KW-0444">Lipid biosynthesis</keyword>
<keyword id="KW-0443">Lipid metabolism</keyword>
<keyword id="KW-0472">Membrane</keyword>
<keyword id="KW-0521">NADP</keyword>
<keyword id="KW-0560">Oxidoreductase</keyword>
<keyword id="KW-1185">Reference proteome</keyword>
<keyword id="KW-0812">Transmembrane</keyword>
<keyword id="KW-1133">Transmembrane helix</keyword>
<accession>Q4X117</accession>
<evidence type="ECO:0000250" key="1">
    <source>
        <dbReference type="UniProtKB" id="L0E2Z4"/>
    </source>
</evidence>
<evidence type="ECO:0000250" key="2">
    <source>
        <dbReference type="UniProtKB" id="O93868"/>
    </source>
</evidence>
<evidence type="ECO:0000250" key="3">
    <source>
        <dbReference type="UniProtKB" id="P38286"/>
    </source>
</evidence>
<evidence type="ECO:0000255" key="4">
    <source>
        <dbReference type="HAMAP-Rule" id="MF_03107"/>
    </source>
</evidence>
<dbReference type="EC" id="1.1.1.330" evidence="4"/>
<dbReference type="EMBL" id="AAHF01000001">
    <property type="protein sequence ID" value="EAL93448.1"/>
    <property type="molecule type" value="Genomic_DNA"/>
</dbReference>
<dbReference type="RefSeq" id="XP_755486.1">
    <property type="nucleotide sequence ID" value="XM_750393.1"/>
</dbReference>
<dbReference type="SMR" id="Q4X117"/>
<dbReference type="FunCoup" id="Q4X117">
    <property type="interactions" value="724"/>
</dbReference>
<dbReference type="STRING" id="330879.Q4X117"/>
<dbReference type="EnsemblFungi" id="EAL93448">
    <property type="protein sequence ID" value="EAL93448"/>
    <property type="gene ID" value="AFUA_2G11540"/>
</dbReference>
<dbReference type="GeneID" id="3512794"/>
<dbReference type="KEGG" id="afm:AFUA_2G11540"/>
<dbReference type="VEuPathDB" id="FungiDB:Afu2g11540"/>
<dbReference type="eggNOG" id="KOG1014">
    <property type="taxonomic scope" value="Eukaryota"/>
</dbReference>
<dbReference type="HOGENOM" id="CLU_010194_38_0_1"/>
<dbReference type="InParanoid" id="Q4X117"/>
<dbReference type="OMA" id="LVAPGMM"/>
<dbReference type="OrthoDB" id="5545019at2759"/>
<dbReference type="UniPathway" id="UPA00094"/>
<dbReference type="Proteomes" id="UP000002530">
    <property type="component" value="Chromosome 2"/>
</dbReference>
<dbReference type="GO" id="GO:0005783">
    <property type="term" value="C:endoplasmic reticulum"/>
    <property type="evidence" value="ECO:0000318"/>
    <property type="project" value="GO_Central"/>
</dbReference>
<dbReference type="GO" id="GO:0005789">
    <property type="term" value="C:endoplasmic reticulum membrane"/>
    <property type="evidence" value="ECO:0007669"/>
    <property type="project" value="UniProtKB-SubCell"/>
</dbReference>
<dbReference type="GO" id="GO:0045703">
    <property type="term" value="F:ketoreductase activity"/>
    <property type="evidence" value="ECO:0007669"/>
    <property type="project" value="UniProtKB-UniRule"/>
</dbReference>
<dbReference type="GO" id="GO:0141040">
    <property type="term" value="F:very-long-chain 3-oxoacyl-CoA reductase activity"/>
    <property type="evidence" value="ECO:0007669"/>
    <property type="project" value="UniProtKB-EC"/>
</dbReference>
<dbReference type="GO" id="GO:0030497">
    <property type="term" value="P:fatty acid elongation"/>
    <property type="evidence" value="ECO:0000318"/>
    <property type="project" value="GO_Central"/>
</dbReference>
<dbReference type="GO" id="GO:0044550">
    <property type="term" value="P:secondary metabolite biosynthetic process"/>
    <property type="evidence" value="ECO:0007669"/>
    <property type="project" value="UniProtKB-ARBA"/>
</dbReference>
<dbReference type="GO" id="GO:0030148">
    <property type="term" value="P:sphingolipid biosynthetic process"/>
    <property type="evidence" value="ECO:0007669"/>
    <property type="project" value="EnsemblFungi"/>
</dbReference>
<dbReference type="GO" id="GO:0042761">
    <property type="term" value="P:very long-chain fatty acid biosynthetic process"/>
    <property type="evidence" value="ECO:0007669"/>
    <property type="project" value="EnsemblFungi"/>
</dbReference>
<dbReference type="CDD" id="cd05356">
    <property type="entry name" value="17beta-HSD1_like_SDR_c"/>
    <property type="match status" value="1"/>
</dbReference>
<dbReference type="FunFam" id="3.40.50.720:FF:000317">
    <property type="entry name" value="Very-long-chain 3-oxoacyl-CoA reductase"/>
    <property type="match status" value="1"/>
</dbReference>
<dbReference type="Gene3D" id="3.40.50.720">
    <property type="entry name" value="NAD(P)-binding Rossmann-like Domain"/>
    <property type="match status" value="1"/>
</dbReference>
<dbReference type="HAMAP" id="MF_03107">
    <property type="entry name" value="3_ketoreductase"/>
    <property type="match status" value="1"/>
</dbReference>
<dbReference type="InterPro" id="IPR027533">
    <property type="entry name" value="3_ketoreductase_fungal"/>
</dbReference>
<dbReference type="InterPro" id="IPR036291">
    <property type="entry name" value="NAD(P)-bd_dom_sf"/>
</dbReference>
<dbReference type="InterPro" id="IPR020904">
    <property type="entry name" value="Sc_DH/Rdtase_CS"/>
</dbReference>
<dbReference type="InterPro" id="IPR002347">
    <property type="entry name" value="SDR_fam"/>
</dbReference>
<dbReference type="PANTHER" id="PTHR43086:SF2">
    <property type="entry name" value="HYDROXYSTEROID DEHYDROGENASE-LIKE PROTEIN 1"/>
    <property type="match status" value="1"/>
</dbReference>
<dbReference type="PANTHER" id="PTHR43086">
    <property type="entry name" value="VERY-LONG-CHAIN 3-OXOOACYL-COA REDUCTASE"/>
    <property type="match status" value="1"/>
</dbReference>
<dbReference type="Pfam" id="PF00106">
    <property type="entry name" value="adh_short"/>
    <property type="match status" value="1"/>
</dbReference>
<dbReference type="PIRSF" id="PIRSF000126">
    <property type="entry name" value="11-beta-HSD1"/>
    <property type="match status" value="1"/>
</dbReference>
<dbReference type="PRINTS" id="PR00081">
    <property type="entry name" value="GDHRDH"/>
</dbReference>
<dbReference type="SUPFAM" id="SSF51735">
    <property type="entry name" value="NAD(P)-binding Rossmann-fold domains"/>
    <property type="match status" value="1"/>
</dbReference>
<dbReference type="PROSITE" id="PS00061">
    <property type="entry name" value="ADH_SHORT"/>
    <property type="match status" value="1"/>
</dbReference>
<protein>
    <recommendedName>
        <fullName evidence="4">Very-long-chain 3-oxoacyl-CoA reductase</fullName>
        <ecNumber evidence="4">1.1.1.330</ecNumber>
    </recommendedName>
    <alternativeName>
        <fullName evidence="4">3-ketoacyl-CoA reductase</fullName>
        <shortName evidence="4">3-ketoreductase</shortName>
        <shortName evidence="4">KAR</shortName>
    </alternativeName>
    <alternativeName>
        <fullName evidence="4">Microsomal beta-keto-reductase</fullName>
    </alternativeName>
</protein>